<evidence type="ECO:0000255" key="1">
    <source>
        <dbReference type="HAMAP-Rule" id="MF_00316"/>
    </source>
</evidence>
<sequence>MKAIILAGGHSVRFGKPKAFAEVNGETFYSRVIKTLESTNMFNEIIISTNAQLATQFKYPNVVIDDENHNDKGPLAGIYTIMKQHPEEELFFVVSVDTPMITGKAVSTLYQFLVSHLIENHLDVAAFKEDGRFIPTIAFYSPNALGAITKALHSDNYSFKNIYHELSTDYLDVRDVDAPSYWYKNINYQHDLDALIQKL</sequence>
<organism>
    <name type="scientific">Staphylococcus aureus (strain JH1)</name>
    <dbReference type="NCBI Taxonomy" id="359787"/>
    <lineage>
        <taxon>Bacteria</taxon>
        <taxon>Bacillati</taxon>
        <taxon>Bacillota</taxon>
        <taxon>Bacilli</taxon>
        <taxon>Bacillales</taxon>
        <taxon>Staphylococcaceae</taxon>
        <taxon>Staphylococcus</taxon>
    </lineage>
</organism>
<name>MOBA_STAA2</name>
<proteinExistence type="inferred from homology"/>
<gene>
    <name evidence="1" type="primary">mobA</name>
    <name type="ordered locus">SaurJH1_2336</name>
</gene>
<reference key="1">
    <citation type="submission" date="2007-06" db="EMBL/GenBank/DDBJ databases">
        <title>Complete sequence of chromosome of Staphylococcus aureus subsp. aureus JH1.</title>
        <authorList>
            <consortium name="US DOE Joint Genome Institute"/>
            <person name="Copeland A."/>
            <person name="Lucas S."/>
            <person name="Lapidus A."/>
            <person name="Barry K."/>
            <person name="Detter J.C."/>
            <person name="Glavina del Rio T."/>
            <person name="Hammon N."/>
            <person name="Israni S."/>
            <person name="Dalin E."/>
            <person name="Tice H."/>
            <person name="Pitluck S."/>
            <person name="Chain P."/>
            <person name="Malfatti S."/>
            <person name="Shin M."/>
            <person name="Vergez L."/>
            <person name="Schmutz J."/>
            <person name="Larimer F."/>
            <person name="Land M."/>
            <person name="Hauser L."/>
            <person name="Kyrpides N."/>
            <person name="Ivanova N."/>
            <person name="Tomasz A."/>
            <person name="Richardson P."/>
        </authorList>
    </citation>
    <scope>NUCLEOTIDE SEQUENCE [LARGE SCALE GENOMIC DNA]</scope>
    <source>
        <strain>JH1</strain>
    </source>
</reference>
<feature type="chain" id="PRO_1000079116" description="Probable molybdenum cofactor guanylyltransferase">
    <location>
        <begin position="1"/>
        <end position="199"/>
    </location>
</feature>
<feature type="binding site" evidence="1">
    <location>
        <begin position="6"/>
        <end position="8"/>
    </location>
    <ligand>
        <name>GTP</name>
        <dbReference type="ChEBI" id="CHEBI:37565"/>
    </ligand>
</feature>
<feature type="binding site" evidence="1">
    <location>
        <position position="18"/>
    </location>
    <ligand>
        <name>GTP</name>
        <dbReference type="ChEBI" id="CHEBI:37565"/>
    </ligand>
</feature>
<feature type="binding site" evidence="1">
    <location>
        <position position="65"/>
    </location>
    <ligand>
        <name>GTP</name>
        <dbReference type="ChEBI" id="CHEBI:37565"/>
    </ligand>
</feature>
<feature type="binding site" evidence="1">
    <location>
        <position position="97"/>
    </location>
    <ligand>
        <name>GTP</name>
        <dbReference type="ChEBI" id="CHEBI:37565"/>
    </ligand>
</feature>
<feature type="binding site" evidence="1">
    <location>
        <position position="97"/>
    </location>
    <ligand>
        <name>Mg(2+)</name>
        <dbReference type="ChEBI" id="CHEBI:18420"/>
    </ligand>
</feature>
<dbReference type="EC" id="2.7.7.77" evidence="1"/>
<dbReference type="EMBL" id="CP000736">
    <property type="protein sequence ID" value="ABR53161.1"/>
    <property type="molecule type" value="Genomic_DNA"/>
</dbReference>
<dbReference type="SMR" id="A6U3Z3"/>
<dbReference type="KEGG" id="sah:SaurJH1_2336"/>
<dbReference type="HOGENOM" id="CLU_055597_2_0_9"/>
<dbReference type="GO" id="GO:0005737">
    <property type="term" value="C:cytoplasm"/>
    <property type="evidence" value="ECO:0007669"/>
    <property type="project" value="UniProtKB-SubCell"/>
</dbReference>
<dbReference type="GO" id="GO:0005525">
    <property type="term" value="F:GTP binding"/>
    <property type="evidence" value="ECO:0007669"/>
    <property type="project" value="UniProtKB-UniRule"/>
</dbReference>
<dbReference type="GO" id="GO:0046872">
    <property type="term" value="F:metal ion binding"/>
    <property type="evidence" value="ECO:0007669"/>
    <property type="project" value="UniProtKB-KW"/>
</dbReference>
<dbReference type="GO" id="GO:0061603">
    <property type="term" value="F:molybdenum cofactor guanylyltransferase activity"/>
    <property type="evidence" value="ECO:0007669"/>
    <property type="project" value="UniProtKB-EC"/>
</dbReference>
<dbReference type="GO" id="GO:0006777">
    <property type="term" value="P:Mo-molybdopterin cofactor biosynthetic process"/>
    <property type="evidence" value="ECO:0007669"/>
    <property type="project" value="UniProtKB-KW"/>
</dbReference>
<dbReference type="CDD" id="cd02503">
    <property type="entry name" value="MobA"/>
    <property type="match status" value="1"/>
</dbReference>
<dbReference type="Gene3D" id="3.90.550.10">
    <property type="entry name" value="Spore Coat Polysaccharide Biosynthesis Protein SpsA, Chain A"/>
    <property type="match status" value="1"/>
</dbReference>
<dbReference type="HAMAP" id="MF_00316">
    <property type="entry name" value="MobA"/>
    <property type="match status" value="1"/>
</dbReference>
<dbReference type="InterPro" id="IPR025877">
    <property type="entry name" value="MobA-like_NTP_Trfase"/>
</dbReference>
<dbReference type="InterPro" id="IPR013482">
    <property type="entry name" value="Molybde_CF_guanTrfase"/>
</dbReference>
<dbReference type="InterPro" id="IPR029044">
    <property type="entry name" value="Nucleotide-diphossugar_trans"/>
</dbReference>
<dbReference type="NCBIfam" id="NF001457">
    <property type="entry name" value="PRK00317.1-3"/>
    <property type="match status" value="1"/>
</dbReference>
<dbReference type="PANTHER" id="PTHR19136">
    <property type="entry name" value="MOLYBDENUM COFACTOR GUANYLYLTRANSFERASE"/>
    <property type="match status" value="1"/>
</dbReference>
<dbReference type="PANTHER" id="PTHR19136:SF81">
    <property type="entry name" value="MOLYBDENUM COFACTOR GUANYLYLTRANSFERASE"/>
    <property type="match status" value="1"/>
</dbReference>
<dbReference type="Pfam" id="PF12804">
    <property type="entry name" value="NTP_transf_3"/>
    <property type="match status" value="1"/>
</dbReference>
<dbReference type="SUPFAM" id="SSF53448">
    <property type="entry name" value="Nucleotide-diphospho-sugar transferases"/>
    <property type="match status" value="1"/>
</dbReference>
<comment type="function">
    <text evidence="1">Transfers a GMP moiety from GTP to Mo-molybdopterin (Mo-MPT) cofactor (Moco or molybdenum cofactor) to form Mo-molybdopterin guanine dinucleotide (Mo-MGD) cofactor.</text>
</comment>
<comment type="catalytic activity">
    <reaction evidence="1">
        <text>Mo-molybdopterin + GTP + H(+) = Mo-molybdopterin guanine dinucleotide + diphosphate</text>
        <dbReference type="Rhea" id="RHEA:34243"/>
        <dbReference type="ChEBI" id="CHEBI:15378"/>
        <dbReference type="ChEBI" id="CHEBI:33019"/>
        <dbReference type="ChEBI" id="CHEBI:37565"/>
        <dbReference type="ChEBI" id="CHEBI:71302"/>
        <dbReference type="ChEBI" id="CHEBI:71310"/>
        <dbReference type="EC" id="2.7.7.77"/>
    </reaction>
</comment>
<comment type="cofactor">
    <cofactor evidence="1">
        <name>Mg(2+)</name>
        <dbReference type="ChEBI" id="CHEBI:18420"/>
    </cofactor>
</comment>
<comment type="subcellular location">
    <subcellularLocation>
        <location evidence="1">Cytoplasm</location>
    </subcellularLocation>
</comment>
<comment type="domain">
    <text evidence="1">The N-terminal domain determines nucleotide recognition and specific binding, while the C-terminal domain determines the specific binding to the target protein.</text>
</comment>
<comment type="similarity">
    <text evidence="1">Belongs to the MobA family.</text>
</comment>
<accession>A6U3Z3</accession>
<keyword id="KW-0963">Cytoplasm</keyword>
<keyword id="KW-0342">GTP-binding</keyword>
<keyword id="KW-0460">Magnesium</keyword>
<keyword id="KW-0479">Metal-binding</keyword>
<keyword id="KW-0501">Molybdenum cofactor biosynthesis</keyword>
<keyword id="KW-0547">Nucleotide-binding</keyword>
<keyword id="KW-0808">Transferase</keyword>
<protein>
    <recommendedName>
        <fullName evidence="1">Probable molybdenum cofactor guanylyltransferase</fullName>
        <shortName evidence="1">MoCo guanylyltransferase</shortName>
        <ecNumber evidence="1">2.7.7.77</ecNumber>
    </recommendedName>
    <alternativeName>
        <fullName evidence="1">GTP:molybdopterin guanylyltransferase</fullName>
    </alternativeName>
    <alternativeName>
        <fullName evidence="1">Mo-MPT guanylyltransferase</fullName>
    </alternativeName>
    <alternativeName>
        <fullName evidence="1">Molybdopterin guanylyltransferase</fullName>
    </alternativeName>
    <alternativeName>
        <fullName evidence="1">Molybdopterin-guanine dinucleotide synthase</fullName>
        <shortName evidence="1">MGD synthase</shortName>
    </alternativeName>
</protein>